<gene>
    <name evidence="1" type="primary">rbcL</name>
</gene>
<sequence>DILAAFRVTPQPGVPPEEAGAAVAAESSTGTWTTVWTDGLTSLDRYKGRCYHIEPVLGEKDQYICYVAYPLDLFEEGSVTNMFTSIVGNVFGFKALRALRLEDLRIPTAYVKTFQGPPHGIQVERDKLNKYGRPLLGCTIKPKLGLSAKNYGRAVYECLRGGLDFTKDDENVNSQPFMRWRDXFLFCAEALYKAQCETGEIKGHYLNATAGTCEEMMKRAIFARELGVPIVMHDYLTGGFTANTTLAHYCRDNGLLLHIHRAMHAVIDRQKNHGMTFRVLAKALRMSGGDHIHAGTVVGKLEGERDITLGFVDLLRDDFIEKDRSRGIYFTQDWVSLPGVIPVASGGIHVXHMPALTEIFGDDAVLQFGGGTLGHPWGNAPGAVANRVALEACVKARNEGRDLAAEGNVIIREXSKWSPELAAACEVWKEIKFEFKAVDTLDPEK</sequence>
<name>RBL_CALDI</name>
<comment type="function">
    <text evidence="1">RuBisCO catalyzes two reactions: the carboxylation of D-ribulose 1,5-bisphosphate, the primary event in carbon dioxide fixation, as well as the oxidative fragmentation of the pentose substrate in the photorespiration process. Both reactions occur simultaneously and in competition at the same active site.</text>
</comment>
<comment type="catalytic activity">
    <reaction evidence="1">
        <text>2 (2R)-3-phosphoglycerate + 2 H(+) = D-ribulose 1,5-bisphosphate + CO2 + H2O</text>
        <dbReference type="Rhea" id="RHEA:23124"/>
        <dbReference type="ChEBI" id="CHEBI:15377"/>
        <dbReference type="ChEBI" id="CHEBI:15378"/>
        <dbReference type="ChEBI" id="CHEBI:16526"/>
        <dbReference type="ChEBI" id="CHEBI:57870"/>
        <dbReference type="ChEBI" id="CHEBI:58272"/>
        <dbReference type="EC" id="4.1.1.39"/>
    </reaction>
</comment>
<comment type="catalytic activity">
    <reaction evidence="1">
        <text>D-ribulose 1,5-bisphosphate + O2 = 2-phosphoglycolate + (2R)-3-phosphoglycerate + 2 H(+)</text>
        <dbReference type="Rhea" id="RHEA:36631"/>
        <dbReference type="ChEBI" id="CHEBI:15378"/>
        <dbReference type="ChEBI" id="CHEBI:15379"/>
        <dbReference type="ChEBI" id="CHEBI:57870"/>
        <dbReference type="ChEBI" id="CHEBI:58033"/>
        <dbReference type="ChEBI" id="CHEBI:58272"/>
    </reaction>
</comment>
<comment type="cofactor">
    <cofactor evidence="1">
        <name>Mg(2+)</name>
        <dbReference type="ChEBI" id="CHEBI:18420"/>
    </cofactor>
    <text evidence="1">Binds 1 Mg(2+) ion per subunit.</text>
</comment>
<comment type="subunit">
    <text evidence="1">Heterohexadecamer of 8 large chains and 8 small chains; disulfide-linked. The disulfide link is formed within the large subunit homodimers.</text>
</comment>
<comment type="subcellular location">
    <subcellularLocation>
        <location>Plastid</location>
        <location>Chloroplast</location>
    </subcellularLocation>
</comment>
<comment type="PTM">
    <text evidence="1">The disulfide bond which can form in the large chain dimeric partners within the hexadecamer appears to be associated with oxidative stress and protein turnover.</text>
</comment>
<comment type="miscellaneous">
    <text evidence="1">The basic functional RuBisCO is composed of a large chain homodimer in a 'head-to-tail' conformation. In form I RuBisCO this homodimer is arranged in a barrel-like tetramer with the small subunits forming a tetrameric 'cap' on each end of the 'barrel'.</text>
</comment>
<comment type="similarity">
    <text evidence="1">Belongs to the RuBisCO large chain family. Type I subfamily.</text>
</comment>
<protein>
    <recommendedName>
        <fullName evidence="1">Ribulose bisphosphate carboxylase large chain</fullName>
        <shortName evidence="1">RuBisCO large subunit</shortName>
        <ecNumber evidence="1">4.1.1.39</ecNumber>
    </recommendedName>
</protein>
<evidence type="ECO:0000255" key="1">
    <source>
        <dbReference type="HAMAP-Rule" id="MF_01338"/>
    </source>
</evidence>
<keyword id="KW-0113">Calvin cycle</keyword>
<keyword id="KW-0120">Carbon dioxide fixation</keyword>
<keyword id="KW-0150">Chloroplast</keyword>
<keyword id="KW-1015">Disulfide bond</keyword>
<keyword id="KW-0456">Lyase</keyword>
<keyword id="KW-0460">Magnesium</keyword>
<keyword id="KW-0479">Metal-binding</keyword>
<keyword id="KW-0503">Monooxygenase</keyword>
<keyword id="KW-0560">Oxidoreductase</keyword>
<keyword id="KW-0601">Photorespiration</keyword>
<keyword id="KW-0602">Photosynthesis</keyword>
<keyword id="KW-0934">Plastid</keyword>
<organism>
    <name type="scientific">Callicarpa dichotoma</name>
    <name type="common">Purple beautyberry</name>
    <name type="synonym">Porphyra dichotoma</name>
    <dbReference type="NCBI Taxonomy" id="28515"/>
    <lineage>
        <taxon>Eukaryota</taxon>
        <taxon>Viridiplantae</taxon>
        <taxon>Streptophyta</taxon>
        <taxon>Embryophyta</taxon>
        <taxon>Tracheophyta</taxon>
        <taxon>Spermatophyta</taxon>
        <taxon>Magnoliopsida</taxon>
        <taxon>eudicotyledons</taxon>
        <taxon>Gunneridae</taxon>
        <taxon>Pentapetalae</taxon>
        <taxon>asterids</taxon>
        <taxon>lamiids</taxon>
        <taxon>Lamiales</taxon>
        <taxon>Lamiaceae</taxon>
        <taxon>Callicarpoideae</taxon>
        <taxon>Callicarpa</taxon>
    </lineage>
</organism>
<proteinExistence type="inferred from homology"/>
<feature type="chain" id="PRO_0000062390" description="Ribulose bisphosphate carboxylase large chain">
    <location>
        <begin position="1" status="less than"/>
        <end position="445"/>
    </location>
</feature>
<feature type="active site" description="Proton acceptor" evidence="1">
    <location>
        <position position="141"/>
    </location>
</feature>
<feature type="active site" description="Proton acceptor" evidence="1">
    <location>
        <position position="260"/>
    </location>
</feature>
<feature type="binding site" description="in homodimeric partner" evidence="1">
    <location>
        <position position="89"/>
    </location>
    <ligand>
        <name>substrate</name>
    </ligand>
</feature>
<feature type="binding site" evidence="1">
    <location>
        <position position="139"/>
    </location>
    <ligand>
        <name>substrate</name>
    </ligand>
</feature>
<feature type="binding site" evidence="1">
    <location>
        <position position="143"/>
    </location>
    <ligand>
        <name>substrate</name>
    </ligand>
</feature>
<feature type="binding site" description="via carbamate group" evidence="1">
    <location>
        <position position="167"/>
    </location>
    <ligand>
        <name>Mg(2+)</name>
        <dbReference type="ChEBI" id="CHEBI:18420"/>
    </ligand>
</feature>
<feature type="binding site" evidence="1">
    <location>
        <position position="169"/>
    </location>
    <ligand>
        <name>Mg(2+)</name>
        <dbReference type="ChEBI" id="CHEBI:18420"/>
    </ligand>
</feature>
<feature type="binding site" evidence="1">
    <location>
        <position position="170"/>
    </location>
    <ligand>
        <name>Mg(2+)</name>
        <dbReference type="ChEBI" id="CHEBI:18420"/>
    </ligand>
</feature>
<feature type="binding site" evidence="1">
    <location>
        <position position="261"/>
    </location>
    <ligand>
        <name>substrate</name>
    </ligand>
</feature>
<feature type="binding site" evidence="1">
    <location>
        <position position="293"/>
    </location>
    <ligand>
        <name>substrate</name>
    </ligand>
</feature>
<feature type="binding site" evidence="1">
    <location>
        <position position="345"/>
    </location>
    <ligand>
        <name>substrate</name>
    </ligand>
</feature>
<feature type="site" description="Transition state stabilizer" evidence="1">
    <location>
        <position position="300"/>
    </location>
</feature>
<feature type="modified residue" description="N6-carboxylysine" evidence="1">
    <location>
        <position position="167"/>
    </location>
</feature>
<feature type="disulfide bond" description="Interchain; in linked form" evidence="1">
    <location>
        <position position="213"/>
    </location>
</feature>
<feature type="non-terminal residue">
    <location>
        <position position="1"/>
    </location>
</feature>
<dbReference type="EC" id="4.1.1.39" evidence="1"/>
<dbReference type="EMBL" id="L14393">
    <property type="protein sequence ID" value="AAA19754.1"/>
    <property type="molecule type" value="Genomic_DNA"/>
</dbReference>
<dbReference type="GO" id="GO:0009507">
    <property type="term" value="C:chloroplast"/>
    <property type="evidence" value="ECO:0007669"/>
    <property type="project" value="UniProtKB-SubCell"/>
</dbReference>
<dbReference type="GO" id="GO:0000287">
    <property type="term" value="F:magnesium ion binding"/>
    <property type="evidence" value="ECO:0007669"/>
    <property type="project" value="InterPro"/>
</dbReference>
<dbReference type="GO" id="GO:0004497">
    <property type="term" value="F:monooxygenase activity"/>
    <property type="evidence" value="ECO:0007669"/>
    <property type="project" value="UniProtKB-KW"/>
</dbReference>
<dbReference type="GO" id="GO:0016984">
    <property type="term" value="F:ribulose-bisphosphate carboxylase activity"/>
    <property type="evidence" value="ECO:0007669"/>
    <property type="project" value="UniProtKB-EC"/>
</dbReference>
<dbReference type="GO" id="GO:0009853">
    <property type="term" value="P:photorespiration"/>
    <property type="evidence" value="ECO:0007669"/>
    <property type="project" value="UniProtKB-KW"/>
</dbReference>
<dbReference type="GO" id="GO:0019253">
    <property type="term" value="P:reductive pentose-phosphate cycle"/>
    <property type="evidence" value="ECO:0007669"/>
    <property type="project" value="UniProtKB-KW"/>
</dbReference>
<dbReference type="CDD" id="cd08212">
    <property type="entry name" value="RuBisCO_large_I"/>
    <property type="match status" value="1"/>
</dbReference>
<dbReference type="FunFam" id="3.20.20.110:FF:000001">
    <property type="entry name" value="Ribulose bisphosphate carboxylase large chain"/>
    <property type="match status" value="1"/>
</dbReference>
<dbReference type="Gene3D" id="3.20.20.110">
    <property type="entry name" value="Ribulose bisphosphate carboxylase, large subunit, C-terminal domain"/>
    <property type="match status" value="1"/>
</dbReference>
<dbReference type="Gene3D" id="3.30.70.150">
    <property type="entry name" value="RuBisCO large subunit, N-terminal domain"/>
    <property type="match status" value="1"/>
</dbReference>
<dbReference type="HAMAP" id="MF_01338">
    <property type="entry name" value="RuBisCO_L_type1"/>
    <property type="match status" value="1"/>
</dbReference>
<dbReference type="InterPro" id="IPR033966">
    <property type="entry name" value="RuBisCO"/>
</dbReference>
<dbReference type="InterPro" id="IPR020878">
    <property type="entry name" value="RuBisCo_large_chain_AS"/>
</dbReference>
<dbReference type="InterPro" id="IPR000685">
    <property type="entry name" value="RuBisCO_lsu_C"/>
</dbReference>
<dbReference type="InterPro" id="IPR036376">
    <property type="entry name" value="RuBisCO_lsu_C_sf"/>
</dbReference>
<dbReference type="InterPro" id="IPR017443">
    <property type="entry name" value="RuBisCO_lsu_fd_N"/>
</dbReference>
<dbReference type="InterPro" id="IPR036422">
    <property type="entry name" value="RuBisCO_lsu_N_sf"/>
</dbReference>
<dbReference type="InterPro" id="IPR020888">
    <property type="entry name" value="RuBisCO_lsuI"/>
</dbReference>
<dbReference type="NCBIfam" id="NF003252">
    <property type="entry name" value="PRK04208.1"/>
    <property type="match status" value="1"/>
</dbReference>
<dbReference type="PANTHER" id="PTHR42704">
    <property type="entry name" value="RIBULOSE BISPHOSPHATE CARBOXYLASE"/>
    <property type="match status" value="1"/>
</dbReference>
<dbReference type="PANTHER" id="PTHR42704:SF15">
    <property type="entry name" value="RIBULOSE BISPHOSPHATE CARBOXYLASE LARGE CHAIN"/>
    <property type="match status" value="1"/>
</dbReference>
<dbReference type="Pfam" id="PF00016">
    <property type="entry name" value="RuBisCO_large"/>
    <property type="match status" value="1"/>
</dbReference>
<dbReference type="Pfam" id="PF02788">
    <property type="entry name" value="RuBisCO_large_N"/>
    <property type="match status" value="1"/>
</dbReference>
<dbReference type="SFLD" id="SFLDG01052">
    <property type="entry name" value="RuBisCO"/>
    <property type="match status" value="1"/>
</dbReference>
<dbReference type="SFLD" id="SFLDS00014">
    <property type="entry name" value="RuBisCO"/>
    <property type="match status" value="1"/>
</dbReference>
<dbReference type="SFLD" id="SFLDG00301">
    <property type="entry name" value="RuBisCO-like_proteins"/>
    <property type="match status" value="1"/>
</dbReference>
<dbReference type="SUPFAM" id="SSF51649">
    <property type="entry name" value="RuBisCo, C-terminal domain"/>
    <property type="match status" value="1"/>
</dbReference>
<dbReference type="SUPFAM" id="SSF54966">
    <property type="entry name" value="RuBisCO, large subunit, small (N-terminal) domain"/>
    <property type="match status" value="1"/>
</dbReference>
<dbReference type="PROSITE" id="PS00157">
    <property type="entry name" value="RUBISCO_LARGE"/>
    <property type="match status" value="1"/>
</dbReference>
<geneLocation type="chloroplast"/>
<reference key="1">
    <citation type="journal article" date="1993" name="Ann. Mo. Bot. Gard.">
        <title>A parsimony analysis of the Asteridae sensu lato based on rbcL sequences.</title>
        <authorList>
            <person name="Olmstead R.G."/>
            <person name="Bremer B."/>
            <person name="Scott K.M."/>
            <person name="Palmer J.D."/>
        </authorList>
        <dbReference type="AGRICOLA" id="IND93053816"/>
    </citation>
    <scope>NUCLEOTIDE SEQUENCE [GENOMIC DNA]</scope>
</reference>
<accession>P36483</accession>